<comment type="catalytic activity">
    <reaction>
        <text>L-histidine + H(+) = histamine + CO2</text>
        <dbReference type="Rhea" id="RHEA:20840"/>
        <dbReference type="ChEBI" id="CHEBI:15378"/>
        <dbReference type="ChEBI" id="CHEBI:16526"/>
        <dbReference type="ChEBI" id="CHEBI:57595"/>
        <dbReference type="ChEBI" id="CHEBI:58432"/>
        <dbReference type="EC" id="4.1.1.22"/>
    </reaction>
</comment>
<comment type="cofactor">
    <cofactor>
        <name>pyruvate</name>
        <dbReference type="ChEBI" id="CHEBI:15361"/>
    </cofactor>
    <text>Binds 1 pyruvoyl group covalently per subunit.</text>
</comment>
<comment type="subunit">
    <text>The proenzyme is a hexamer of identical pi chains; each pi chain monomer is cleaved to form a small (or beta) chain and a large (or alpha) chain by non-hydrolytic self-catalysis.</text>
</comment>
<sequence>MSEFDKKLNTLGVDRISVSPYKKWSRGYMEPGNIGNGYVSGLKVDAGVVDKTDDMVLDGIGSYDRAETKNAYIGQINMTTASSFSGVGGTVISYDILRNPEVDKAKPLFTEKQWD</sequence>
<evidence type="ECO:0000269" key="1">
    <source>
    </source>
</evidence>
<dbReference type="EC" id="4.1.1.22"/>
<dbReference type="PIR" id="A01080">
    <property type="entry name" value="DCLBHB"/>
</dbReference>
<dbReference type="SMR" id="P04193"/>
<dbReference type="MEROPS" id="X39.001"/>
<dbReference type="SABIO-RK" id="P04193"/>
<dbReference type="GO" id="GO:0004398">
    <property type="term" value="F:histidine decarboxylase activity"/>
    <property type="evidence" value="ECO:0007669"/>
    <property type="project" value="UniProtKB-EC"/>
</dbReference>
<dbReference type="GO" id="GO:0006547">
    <property type="term" value="P:L-histidine metabolic process"/>
    <property type="evidence" value="ECO:0007669"/>
    <property type="project" value="InterPro"/>
</dbReference>
<dbReference type="Gene3D" id="4.10.510.10">
    <property type="entry name" value="Pyruvoyl-Dependent Histidine Decarboxylas, subunit A"/>
    <property type="match status" value="1"/>
</dbReference>
<dbReference type="Gene3D" id="3.50.20.10">
    <property type="entry name" value="Pyruvoyl-Dependent Histidine Decarboxylase, subunit B"/>
    <property type="match status" value="1"/>
</dbReference>
<dbReference type="InterPro" id="IPR003427">
    <property type="entry name" value="His_de-COase_proenz"/>
</dbReference>
<dbReference type="InterPro" id="IPR016106">
    <property type="entry name" value="Pyr-dep_his-deCO2ase_N"/>
</dbReference>
<dbReference type="InterPro" id="IPR016104">
    <property type="entry name" value="Pyr-dep_his/arg-deCO2ase"/>
</dbReference>
<dbReference type="InterPro" id="IPR016105">
    <property type="entry name" value="Pyr-dep_his/arg-deCO2ase_sand"/>
</dbReference>
<dbReference type="Pfam" id="PF02329">
    <property type="entry name" value="HDC"/>
    <property type="match status" value="1"/>
</dbReference>
<dbReference type="SUPFAM" id="SSF56271">
    <property type="entry name" value="Pyruvoyl-dependent histidine and arginine decarboxylases"/>
    <property type="match status" value="1"/>
</dbReference>
<proteinExistence type="evidence at protein level"/>
<feature type="initiator methionine" description="Removed" evidence="1">
    <location>
        <position position="1"/>
    </location>
</feature>
<feature type="chain" id="PRO_0000029955" description="Histidine decarboxylase beta chain">
    <location>
        <begin position="2"/>
        <end position="82"/>
    </location>
</feature>
<feature type="chain" id="PRO_0000029956" description="Histidine decarboxylase alpha chain">
    <location>
        <begin position="83"/>
        <end position="115" status="greater than"/>
    </location>
</feature>
<feature type="site" description="Cleavage (non-hydrolytic)">
    <location>
        <begin position="82"/>
        <end position="83"/>
    </location>
</feature>
<feature type="modified residue" description="Pyruvic acid (Ser)" evidence="1">
    <location>
        <position position="83"/>
    </location>
</feature>
<feature type="non-terminal residue">
    <location>
        <position position="115"/>
    </location>
</feature>
<organism>
    <name type="scientific">Lentilactobacillus buchneri</name>
    <name type="common">Lactobacillus buchneri</name>
    <dbReference type="NCBI Taxonomy" id="1581"/>
    <lineage>
        <taxon>Bacteria</taxon>
        <taxon>Bacillati</taxon>
        <taxon>Bacillota</taxon>
        <taxon>Bacilli</taxon>
        <taxon>Lactobacillales</taxon>
        <taxon>Lactobacillaceae</taxon>
        <taxon>Lentilactobacillus</taxon>
    </lineage>
</organism>
<name>DCHS_LENBU</name>
<reference key="1">
    <citation type="journal article" date="1985" name="J. Biol. Chem.">
        <title>Pyruvoyl-dependent histidine decarboxylases. Preparation and amino acid sequences of the beta chains of histidine decarboxylase from Clostridium perfringens and Lactobacillus buchneri.</title>
        <authorList>
            <person name="Huynh Q.K."/>
            <person name="Snell E.E."/>
        </authorList>
    </citation>
    <scope>PROTEIN SEQUENCE OF 2-115</scope>
    <scope>PYRUVATE FORMATION AT SER-83</scope>
</reference>
<keyword id="KW-0210">Decarboxylase</keyword>
<keyword id="KW-0903">Direct protein sequencing</keyword>
<keyword id="KW-0456">Lyase</keyword>
<keyword id="KW-0670">Pyruvate</keyword>
<keyword id="KW-0865">Zymogen</keyword>
<accession>P04193</accession>
<protein>
    <recommendedName>
        <fullName>Histidine decarboxylase proenzyme</fullName>
        <shortName>HDC</shortName>
        <ecNumber>4.1.1.22</ecNumber>
    </recommendedName>
    <alternativeName>
        <fullName>Pi chain</fullName>
    </alternativeName>
    <component>
        <recommendedName>
            <fullName>Histidine decarboxylase beta chain</fullName>
        </recommendedName>
    </component>
    <component>
        <recommendedName>
            <fullName>Histidine decarboxylase alpha chain</fullName>
        </recommendedName>
    </component>
</protein>